<organism>
    <name type="scientific">Mus musculus</name>
    <name type="common">Mouse</name>
    <dbReference type="NCBI Taxonomy" id="10090"/>
    <lineage>
        <taxon>Eukaryota</taxon>
        <taxon>Metazoa</taxon>
        <taxon>Chordata</taxon>
        <taxon>Craniata</taxon>
        <taxon>Vertebrata</taxon>
        <taxon>Euteleostomi</taxon>
        <taxon>Mammalia</taxon>
        <taxon>Eutheria</taxon>
        <taxon>Euarchontoglires</taxon>
        <taxon>Glires</taxon>
        <taxon>Rodentia</taxon>
        <taxon>Myomorpha</taxon>
        <taxon>Muroidea</taxon>
        <taxon>Muridae</taxon>
        <taxon>Murinae</taxon>
        <taxon>Mus</taxon>
        <taxon>Mus</taxon>
    </lineage>
</organism>
<protein>
    <recommendedName>
        <fullName>Protein phosphatase 1 regulatory inhibitor subunit 16B</fullName>
    </recommendedName>
    <alternativeName>
        <fullName>CAAX box protein TIMAP</fullName>
    </alternativeName>
    <alternativeName>
        <fullName>TGF-beta-inhibited membrane-associated protein</fullName>
    </alternativeName>
</protein>
<evidence type="ECO:0000250" key="1">
    <source>
        <dbReference type="UniProtKB" id="Q923M0"/>
    </source>
</evidence>
<evidence type="ECO:0000250" key="2">
    <source>
        <dbReference type="UniProtKB" id="Q95N27"/>
    </source>
</evidence>
<evidence type="ECO:0000250" key="3">
    <source>
        <dbReference type="UniProtKB" id="Q96T49"/>
    </source>
</evidence>
<evidence type="ECO:0000255" key="4"/>
<evidence type="ECO:0000256" key="5">
    <source>
        <dbReference type="SAM" id="MobiDB-lite"/>
    </source>
</evidence>
<evidence type="ECO:0000269" key="6">
    <source>
    </source>
</evidence>
<evidence type="ECO:0000305" key="7"/>
<evidence type="ECO:0007744" key="8">
    <source>
    </source>
</evidence>
<name>PP16B_MOUSE</name>
<reference key="1">
    <citation type="journal article" date="2002" name="Gene Expr. Patterns">
        <title>mPPP1R16B is a novel mouse protein phosphatase 1 targeting subunit whose mRNA is located in cell bodies and dendrites of neurons in four distinct regions of the brain.</title>
        <authorList>
            <person name="Magdaleno S."/>
            <person name="Northcutt G.M."/>
            <person name="Curran T."/>
            <person name="Kurschner C."/>
        </authorList>
    </citation>
    <scope>NUCLEOTIDE SEQUENCE [MRNA]</scope>
    <source>
        <strain>BALB/cJ</strain>
        <tissue>Cerebellum</tissue>
    </source>
</reference>
<reference key="2">
    <citation type="journal article" date="2004" name="Genome Res.">
        <title>The status, quality, and expansion of the NIH full-length cDNA project: the Mammalian Gene Collection (MGC).</title>
        <authorList>
            <consortium name="The MGC Project Team"/>
        </authorList>
    </citation>
    <scope>NUCLEOTIDE SEQUENCE [LARGE SCALE MRNA]</scope>
    <source>
        <strain>C57BL/6J</strain>
        <tissue>Brain</tissue>
    </source>
</reference>
<reference key="3">
    <citation type="journal article" date="2010" name="Cell">
        <title>A tissue-specific atlas of mouse protein phosphorylation and expression.</title>
        <authorList>
            <person name="Huttlin E.L."/>
            <person name="Jedrychowski M.P."/>
            <person name="Elias J.E."/>
            <person name="Goswami T."/>
            <person name="Rad R."/>
            <person name="Beausoleil S.A."/>
            <person name="Villen J."/>
            <person name="Haas W."/>
            <person name="Sowa M.E."/>
            <person name="Gygi S.P."/>
        </authorList>
    </citation>
    <scope>PHOSPHORYLATION [LARGE SCALE ANALYSIS] AT SER-69</scope>
    <scope>IDENTIFICATION BY MASS SPECTROMETRY [LARGE SCALE ANALYSIS]</scope>
    <source>
        <tissue>Lung</tissue>
    </source>
</reference>
<reference key="4">
    <citation type="journal article" date="2011" name="Respir. Physiol. Neurobiol.">
        <title>TIMAP protects endothelial barrier from LPS-induced vascular leakage and is down-regulated by LPS.</title>
        <authorList>
            <person name="Poirier C."/>
            <person name="Gorshkov B.A."/>
            <person name="Zemskova M.A."/>
            <person name="Bogatcheva N.V."/>
            <person name="Verin A.D."/>
        </authorList>
    </citation>
    <scope>FUNCTION</scope>
    <scope>INDUCTION BY LPS</scope>
</reference>
<dbReference type="EMBL" id="AF423761">
    <property type="protein sequence ID" value="AAL62093.1"/>
    <property type="molecule type" value="mRNA"/>
</dbReference>
<dbReference type="EMBL" id="BC054764">
    <property type="protein sequence ID" value="AAH54764.1"/>
    <property type="molecule type" value="mRNA"/>
</dbReference>
<dbReference type="EMBL" id="BC057542">
    <property type="protein sequence ID" value="AAH57542.1"/>
    <property type="molecule type" value="mRNA"/>
</dbReference>
<dbReference type="CCDS" id="CCDS16991.1"/>
<dbReference type="RefSeq" id="NP_001153134.1">
    <property type="nucleotide sequence ID" value="NM_001159662.1"/>
</dbReference>
<dbReference type="RefSeq" id="NP_694729.1">
    <property type="nucleotide sequence ID" value="NM_153089.4"/>
</dbReference>
<dbReference type="RefSeq" id="XP_011237794.1">
    <property type="nucleotide sequence ID" value="XM_011239492.4"/>
</dbReference>
<dbReference type="SMR" id="Q8VHQ3"/>
<dbReference type="BioGRID" id="230784">
    <property type="interactions" value="1"/>
</dbReference>
<dbReference type="FunCoup" id="Q8VHQ3">
    <property type="interactions" value="2160"/>
</dbReference>
<dbReference type="IntAct" id="Q8VHQ3">
    <property type="interactions" value="1"/>
</dbReference>
<dbReference type="MINT" id="Q8VHQ3"/>
<dbReference type="STRING" id="10090.ENSMUSP00000062615"/>
<dbReference type="GlyGen" id="Q8VHQ3">
    <property type="glycosylation" value="3 sites, 1 O-linked glycan (2 sites)"/>
</dbReference>
<dbReference type="iPTMnet" id="Q8VHQ3"/>
<dbReference type="PhosphoSitePlus" id="Q8VHQ3"/>
<dbReference type="PaxDb" id="10090-ENSMUSP00000062615"/>
<dbReference type="ProteomicsDB" id="289869"/>
<dbReference type="Antibodypedia" id="26914">
    <property type="antibodies" value="147 antibodies from 25 providers"/>
</dbReference>
<dbReference type="DNASU" id="228852"/>
<dbReference type="Ensembl" id="ENSMUST00000045503.11">
    <property type="protein sequence ID" value="ENSMUSP00000039540.5"/>
    <property type="gene ID" value="ENSMUSG00000037754.14"/>
</dbReference>
<dbReference type="Ensembl" id="ENSMUST00000052927.11">
    <property type="protein sequence ID" value="ENSMUSP00000062615.5"/>
    <property type="gene ID" value="ENSMUSG00000037754.14"/>
</dbReference>
<dbReference type="Ensembl" id="ENSMUST00000103116.10">
    <property type="protein sequence ID" value="ENSMUSP00000099405.4"/>
    <property type="gene ID" value="ENSMUSG00000037754.14"/>
</dbReference>
<dbReference type="GeneID" id="228852"/>
<dbReference type="KEGG" id="mmu:228852"/>
<dbReference type="UCSC" id="uc008nqo.2">
    <property type="organism name" value="mouse"/>
</dbReference>
<dbReference type="AGR" id="MGI:2151841"/>
<dbReference type="CTD" id="26051"/>
<dbReference type="MGI" id="MGI:2151841">
    <property type="gene designation" value="Ppp1r16b"/>
</dbReference>
<dbReference type="VEuPathDB" id="HostDB:ENSMUSG00000037754"/>
<dbReference type="eggNOG" id="KOG0505">
    <property type="taxonomic scope" value="Eukaryota"/>
</dbReference>
<dbReference type="GeneTree" id="ENSGT00940000154090"/>
<dbReference type="HOGENOM" id="CLU_000134_54_2_1"/>
<dbReference type="InParanoid" id="Q8VHQ3"/>
<dbReference type="OMA" id="MVWQQLG"/>
<dbReference type="OrthoDB" id="51625at9989"/>
<dbReference type="PhylomeDB" id="Q8VHQ3"/>
<dbReference type="TreeFam" id="TF316803"/>
<dbReference type="BioGRID-ORCS" id="228852">
    <property type="hits" value="3 hits in 77 CRISPR screens"/>
</dbReference>
<dbReference type="PRO" id="PR:Q8VHQ3"/>
<dbReference type="Proteomes" id="UP000000589">
    <property type="component" value="Chromosome 2"/>
</dbReference>
<dbReference type="RNAct" id="Q8VHQ3">
    <property type="molecule type" value="protein"/>
</dbReference>
<dbReference type="Bgee" id="ENSMUSG00000037754">
    <property type="expression patterns" value="Expressed in dorsal striatum and 200 other cell types or tissues"/>
</dbReference>
<dbReference type="ExpressionAtlas" id="Q8VHQ3">
    <property type="expression patterns" value="baseline and differential"/>
</dbReference>
<dbReference type="GO" id="GO:0042995">
    <property type="term" value="C:cell projection"/>
    <property type="evidence" value="ECO:0007669"/>
    <property type="project" value="UniProtKB-SubCell"/>
</dbReference>
<dbReference type="GO" id="GO:0016607">
    <property type="term" value="C:nuclear speck"/>
    <property type="evidence" value="ECO:0007669"/>
    <property type="project" value="Ensembl"/>
</dbReference>
<dbReference type="GO" id="GO:0005634">
    <property type="term" value="C:nucleus"/>
    <property type="evidence" value="ECO:0000250"/>
    <property type="project" value="UniProtKB"/>
</dbReference>
<dbReference type="GO" id="GO:0048471">
    <property type="term" value="C:perinuclear region of cytoplasm"/>
    <property type="evidence" value="ECO:0007669"/>
    <property type="project" value="Ensembl"/>
</dbReference>
<dbReference type="GO" id="GO:0005886">
    <property type="term" value="C:plasma membrane"/>
    <property type="evidence" value="ECO:0000250"/>
    <property type="project" value="UniProtKB"/>
</dbReference>
<dbReference type="GO" id="GO:0019888">
    <property type="term" value="F:protein phosphatase regulator activity"/>
    <property type="evidence" value="ECO:0007669"/>
    <property type="project" value="Ensembl"/>
</dbReference>
<dbReference type="GO" id="GO:0061028">
    <property type="term" value="P:establishment of endothelial barrier"/>
    <property type="evidence" value="ECO:0000315"/>
    <property type="project" value="MGI"/>
</dbReference>
<dbReference type="GO" id="GO:1903589">
    <property type="term" value="P:positive regulation of blood vessel endothelial cell proliferation involved in sprouting angiogenesis"/>
    <property type="evidence" value="ECO:0007669"/>
    <property type="project" value="Ensembl"/>
</dbReference>
<dbReference type="GO" id="GO:0051489">
    <property type="term" value="P:regulation of filopodium assembly"/>
    <property type="evidence" value="ECO:0000250"/>
    <property type="project" value="UniProtKB"/>
</dbReference>
<dbReference type="GO" id="GO:0051896">
    <property type="term" value="P:regulation of phosphatidylinositol 3-kinase/protein kinase B signal transduction"/>
    <property type="evidence" value="ECO:0007669"/>
    <property type="project" value="Ensembl"/>
</dbReference>
<dbReference type="FunFam" id="1.25.40.20:FF:000105">
    <property type="entry name" value="protein phosphatase 1 regulatory inhibitor subunit 16B"/>
    <property type="match status" value="1"/>
</dbReference>
<dbReference type="FunFam" id="1.25.40.20:FF:000079">
    <property type="entry name" value="Protein phosphatase 1 regulatory subunit 16B"/>
    <property type="match status" value="1"/>
</dbReference>
<dbReference type="Gene3D" id="1.25.40.20">
    <property type="entry name" value="Ankyrin repeat-containing domain"/>
    <property type="match status" value="2"/>
</dbReference>
<dbReference type="InterPro" id="IPR002110">
    <property type="entry name" value="Ankyrin_rpt"/>
</dbReference>
<dbReference type="InterPro" id="IPR036770">
    <property type="entry name" value="Ankyrin_rpt-contain_sf"/>
</dbReference>
<dbReference type="InterPro" id="IPR017417">
    <property type="entry name" value="Pase-1_reg_su_16AB"/>
</dbReference>
<dbReference type="InterPro" id="IPR051226">
    <property type="entry name" value="PP1_Regulatory_Subunit"/>
</dbReference>
<dbReference type="PANTHER" id="PTHR24179:SF31">
    <property type="entry name" value="PROTEIN PHOSPHATASE 1 REGULATORY INHIBITOR SUBUNIT 16B"/>
    <property type="match status" value="1"/>
</dbReference>
<dbReference type="PANTHER" id="PTHR24179">
    <property type="entry name" value="PROTEIN PHOSPHATASE 1 REGULATORY SUBUNIT 12"/>
    <property type="match status" value="1"/>
</dbReference>
<dbReference type="Pfam" id="PF12796">
    <property type="entry name" value="Ank_2"/>
    <property type="match status" value="2"/>
</dbReference>
<dbReference type="PIRSF" id="PIRSF038159">
    <property type="entry name" value="PP1_16AB_vert"/>
    <property type="match status" value="1"/>
</dbReference>
<dbReference type="SMART" id="SM00248">
    <property type="entry name" value="ANK"/>
    <property type="match status" value="5"/>
</dbReference>
<dbReference type="SUPFAM" id="SSF48403">
    <property type="entry name" value="Ankyrin repeat"/>
    <property type="match status" value="1"/>
</dbReference>
<dbReference type="PROSITE" id="PS50297">
    <property type="entry name" value="ANK_REP_REGION"/>
    <property type="match status" value="1"/>
</dbReference>
<dbReference type="PROSITE" id="PS50088">
    <property type="entry name" value="ANK_REPEAT"/>
    <property type="match status" value="4"/>
</dbReference>
<feature type="chain" id="PRO_0000067044" description="Protein phosphatase 1 regulatory inhibitor subunit 16B">
    <location>
        <begin position="1"/>
        <end position="565"/>
    </location>
</feature>
<feature type="propeptide" id="PRO_0000396711" description="Removed in mature form" evidence="4">
    <location>
        <begin position="566"/>
        <end position="568"/>
    </location>
</feature>
<feature type="repeat" description="ANK 1">
    <location>
        <begin position="100"/>
        <end position="129"/>
    </location>
</feature>
<feature type="repeat" description="ANK 2">
    <location>
        <begin position="133"/>
        <end position="162"/>
    </location>
</feature>
<feature type="repeat" description="ANK 3">
    <location>
        <begin position="228"/>
        <end position="257"/>
    </location>
</feature>
<feature type="repeat" description="ANK 4">
    <location>
        <begin position="261"/>
        <end position="290"/>
    </location>
</feature>
<feature type="repeat" description="ANK 5">
    <location>
        <begin position="531"/>
        <end position="560"/>
    </location>
</feature>
<feature type="region of interest" description="Disordered" evidence="5">
    <location>
        <begin position="373"/>
        <end position="403"/>
    </location>
</feature>
<feature type="region of interest" description="Disordered" evidence="5">
    <location>
        <begin position="505"/>
        <end position="527"/>
    </location>
</feature>
<feature type="coiled-coil region" evidence="4">
    <location>
        <begin position="15"/>
        <end position="55"/>
    </location>
</feature>
<feature type="compositionally biased region" description="Basic and acidic residues" evidence="5">
    <location>
        <begin position="386"/>
        <end position="403"/>
    </location>
</feature>
<feature type="compositionally biased region" description="Low complexity" evidence="5">
    <location>
        <begin position="505"/>
        <end position="517"/>
    </location>
</feature>
<feature type="modified residue" description="Phosphoserine" evidence="8">
    <location>
        <position position="69"/>
    </location>
</feature>
<feature type="modified residue" description="Phosphoserine" evidence="2">
    <location>
        <position position="333"/>
    </location>
</feature>
<feature type="modified residue" description="Phosphoserine" evidence="2">
    <location>
        <position position="337"/>
    </location>
</feature>
<feature type="modified residue" description="Phosphoserine" evidence="3">
    <location>
        <position position="350"/>
    </location>
</feature>
<feature type="modified residue" description="Phosphoserine" evidence="3">
    <location>
        <position position="477"/>
    </location>
</feature>
<feature type="modified residue" description="Cysteine methyl ester" evidence="1">
    <location>
        <position position="565"/>
    </location>
</feature>
<feature type="lipid moiety-binding region" description="S-palmitoyl cysteine" evidence="1">
    <location>
        <position position="564"/>
    </location>
</feature>
<feature type="lipid moiety-binding region" description="S-farnesyl cysteine" evidence="1">
    <location>
        <position position="565"/>
    </location>
</feature>
<gene>
    <name type="primary">Ppp1r16b</name>
</gene>
<accession>Q8VHQ3</accession>
<keyword id="KW-0040">ANK repeat</keyword>
<keyword id="KW-1003">Cell membrane</keyword>
<keyword id="KW-0966">Cell projection</keyword>
<keyword id="KW-0175">Coiled coil</keyword>
<keyword id="KW-0449">Lipoprotein</keyword>
<keyword id="KW-0472">Membrane</keyword>
<keyword id="KW-0488">Methylation</keyword>
<keyword id="KW-0539">Nucleus</keyword>
<keyword id="KW-0564">Palmitate</keyword>
<keyword id="KW-0597">Phosphoprotein</keyword>
<keyword id="KW-0636">Prenylation</keyword>
<keyword id="KW-1185">Reference proteome</keyword>
<keyword id="KW-0677">Repeat</keyword>
<proteinExistence type="evidence at protein level"/>
<comment type="function">
    <text evidence="2 3 6">Regulator of protein phosphatase 1 (PP1) that acts as a positive regulator of pulmonary endothelial cell (EC) barrier function. Protects the endothelial barrier from lipopolysaccharide (LPS)-induced vascular leakage (PubMed:21907835). Involved in the regulation of the PI3K/AKT signaling pathway (By similarity). Involved in the regulation of angiogenesis and endothelial cell proliferation through the control of ECE1 dephosphorylation, trafficking and activity (By similarity). Involved in the regulation of endothelial cell filopodia extension (By similarity). May be a downstream target for TGF-beta1 signaling cascade in endothelial cells (By similarity). Involved in PKA-mediated moesin dephosphorylation which is important in EC barrier protection against thrombin stimulation. Promotes the interaction of PPP1CA with RPSA/LAMR1 and in turn facilitates the dephosphorylation of RPSA/LAMR1 (By similarity). Involved in the dephosphorylation of EEF1A1 (By similarity).</text>
</comment>
<comment type="subunit">
    <text evidence="2 3">Interacts with PPP1CA, PPP1CB and MSN. Interacts (via its fourth ankyrin repeat) with the mature dimeric form of RPSA/LAMR1 (By similarity). Interacts with EEF1A1 (By similarity). Interacts with PTEN (By similarity). Interacts with ECE1 (By similarity).</text>
</comment>
<comment type="subcellular location">
    <subcellularLocation>
        <location evidence="3">Cell membrane</location>
    </subcellularLocation>
    <subcellularLocation>
        <location evidence="7">Cell membrane</location>
        <topology evidence="7">Lipid-anchor</topology>
    </subcellularLocation>
    <subcellularLocation>
        <location evidence="3">Nucleus</location>
    </subcellularLocation>
    <subcellularLocation>
        <location evidence="3">Cell projection</location>
    </subcellularLocation>
    <text evidence="2 3">Colocalizes with RPSA/LAMR1 in the cell membrane (By similarity). Localizes to the perinuclear region (By similarity). Colocalizes with PTEN at the tip of EC projections (By similarity).</text>
</comment>
<comment type="induction">
    <text evidence="6 7">Inhibited by TGF-beta1 (Probable). Down-regulated by LPS (PubMed:21907835).</text>
</comment>
<comment type="PTM">
    <text evidence="2">Phosphorylated by PKA and, after PKA priming, by GSK3B. Phosphorylation by GSK3B reduces its association with PP1C and enhances PP1C activity. Dephosphorylation by its associated PP1C results in enhanced association with PP1C, but reduced PP1C activity (By similarity).</text>
</comment>
<sequence length="568" mass="63571">MASHVDLLTELQLLEKVPTLERLRAAQKRRAQQLKKWAQYEQDLLHRKRKHERKRSTGGRRKKVSFEASVALLEASLRNDAEEVRYFLKNKVSPDLCNEDGLTALHQCCIDNFEEIVKLLLSHGANVNAKDNELWTPLHAAATCGHINLVKILVQYGADLLAVNSDGNMPYDLCEDEPTLDVIETCMAYQGITQEKINEMRAAPEQKMISDIHCMIAAGQDLDWIDGQGATLLHIAGANGYLRAAELLLDHGVRVDVKDWDGWEPLHAAAFWGQMPMAELLVSHGASLSARTSMDEMPIDLCEEEEFKVLLLELKHKHDVIMKSQLRHKSSLSRRTSSAGSRGKVVRRASLSDRTNLYRKEYEGEAILWQQRSAAEDQRTSTYNGDIRETRTDQENKDPNPRLEKPVLLSEFSTKISRGELDGPVENGLRAPVSTYQYALANGDIWKMHEMPDYSMAYGNPGVADVPPPWSGFKEQSPQTLLELKRQRAAAKLLSHPFLSTHLGSSVARSGESSSEGKAPLIGGRTSPYSSNGTSVYYTVTSGDPPLLKFKAPMEEMEEKVHGCCRIS</sequence>